<reference key="1">
    <citation type="journal article" date="2009" name="PLoS Genet.">
        <title>Organised genome dynamics in the Escherichia coli species results in highly diverse adaptive paths.</title>
        <authorList>
            <person name="Touchon M."/>
            <person name="Hoede C."/>
            <person name="Tenaillon O."/>
            <person name="Barbe V."/>
            <person name="Baeriswyl S."/>
            <person name="Bidet P."/>
            <person name="Bingen E."/>
            <person name="Bonacorsi S."/>
            <person name="Bouchier C."/>
            <person name="Bouvet O."/>
            <person name="Calteau A."/>
            <person name="Chiapello H."/>
            <person name="Clermont O."/>
            <person name="Cruveiller S."/>
            <person name="Danchin A."/>
            <person name="Diard M."/>
            <person name="Dossat C."/>
            <person name="Karoui M.E."/>
            <person name="Frapy E."/>
            <person name="Garry L."/>
            <person name="Ghigo J.M."/>
            <person name="Gilles A.M."/>
            <person name="Johnson J."/>
            <person name="Le Bouguenec C."/>
            <person name="Lescat M."/>
            <person name="Mangenot S."/>
            <person name="Martinez-Jehanne V."/>
            <person name="Matic I."/>
            <person name="Nassif X."/>
            <person name="Oztas S."/>
            <person name="Petit M.A."/>
            <person name="Pichon C."/>
            <person name="Rouy Z."/>
            <person name="Ruf C.S."/>
            <person name="Schneider D."/>
            <person name="Tourret J."/>
            <person name="Vacherie B."/>
            <person name="Vallenet D."/>
            <person name="Medigue C."/>
            <person name="Rocha E.P.C."/>
            <person name="Denamur E."/>
        </authorList>
    </citation>
    <scope>NUCLEOTIDE SEQUENCE [LARGE SCALE GENOMIC DNA]</scope>
    <source>
        <strain>IAI39 / ExPEC</strain>
    </source>
</reference>
<organism>
    <name type="scientific">Escherichia coli O7:K1 (strain IAI39 / ExPEC)</name>
    <dbReference type="NCBI Taxonomy" id="585057"/>
    <lineage>
        <taxon>Bacteria</taxon>
        <taxon>Pseudomonadati</taxon>
        <taxon>Pseudomonadota</taxon>
        <taxon>Gammaproteobacteria</taxon>
        <taxon>Enterobacterales</taxon>
        <taxon>Enterobacteriaceae</taxon>
        <taxon>Escherichia</taxon>
    </lineage>
</organism>
<protein>
    <recommendedName>
        <fullName evidence="1">G/U mismatch-specific DNA glycosylase</fullName>
        <ecNumber evidence="1">3.2.2.28</ecNumber>
    </recommendedName>
    <alternativeName>
        <fullName evidence="1">Double-strand-specific uracil glycosylase</fullName>
    </alternativeName>
    <alternativeName>
        <fullName evidence="1">Mismatch-specific uracil DNA-glycosylase</fullName>
        <shortName evidence="1">MUG</shortName>
    </alternativeName>
</protein>
<sequence>MVEDILAPGLRVVFCGINPGLSSAGTGFPFAHPANRFWKVIYQAGFTDRQLKPQEAQHLLDYRCGVTKLVDRPTVQANEVSKQELHAGGRKLIEKIEDYQPQALAILGKQAYEQGFSQRGAQWGKQTLTIGSTQIWVLPNPSGLSRVSLEKLVEAYRELDQALVVRGR</sequence>
<comment type="function">
    <text evidence="1">Excises ethenocytosine and uracil, which can arise by alkylation or deamination of cytosine, respectively, from the corresponding mispairs with guanine in ds-DNA. It is capable of hydrolyzing the carbon-nitrogen bond between the sugar-phosphate backbone of the DNA and the mispaired base. The complementary strand guanine functions in substrate recognition. Required for DNA damage lesion repair in stationary-phase cells.</text>
</comment>
<comment type="catalytic activity">
    <reaction evidence="1">
        <text>Specifically hydrolyzes mismatched double-stranded DNA and polynucleotides, releasing free uracil.</text>
        <dbReference type="EC" id="3.2.2.28"/>
    </reaction>
</comment>
<comment type="subunit">
    <text evidence="1">Binds DNA as a monomer.</text>
</comment>
<comment type="subcellular location">
    <subcellularLocation>
        <location evidence="1">Cytoplasm</location>
    </subcellularLocation>
</comment>
<comment type="similarity">
    <text evidence="1">Belongs to the uracil-DNA glycosylase (UDG) superfamily. TDG/mug family.</text>
</comment>
<keyword id="KW-0963">Cytoplasm</keyword>
<keyword id="KW-0227">DNA damage</keyword>
<keyword id="KW-0228">DNA excision</keyword>
<keyword id="KW-0234">DNA repair</keyword>
<keyword id="KW-0238">DNA-binding</keyword>
<keyword id="KW-0378">Hydrolase</keyword>
<accession>B7NJT2</accession>
<feature type="chain" id="PRO_1000188953" description="G/U mismatch-specific DNA glycosylase">
    <location>
        <begin position="1"/>
        <end position="168"/>
    </location>
</feature>
<dbReference type="EC" id="3.2.2.28" evidence="1"/>
<dbReference type="EMBL" id="CU928164">
    <property type="protein sequence ID" value="CAR19681.1"/>
    <property type="molecule type" value="Genomic_DNA"/>
</dbReference>
<dbReference type="RefSeq" id="WP_000228937.1">
    <property type="nucleotide sequence ID" value="NC_011750.1"/>
</dbReference>
<dbReference type="RefSeq" id="YP_002409469.1">
    <property type="nucleotide sequence ID" value="NC_011750.1"/>
</dbReference>
<dbReference type="SMR" id="B7NJT2"/>
<dbReference type="STRING" id="585057.ECIAI39_3565"/>
<dbReference type="GeneID" id="93778924"/>
<dbReference type="KEGG" id="ect:ECIAI39_3565"/>
<dbReference type="PATRIC" id="fig|585057.6.peg.3695"/>
<dbReference type="HOGENOM" id="CLU_042829_3_1_6"/>
<dbReference type="Proteomes" id="UP000000749">
    <property type="component" value="Chromosome"/>
</dbReference>
<dbReference type="GO" id="GO:0005737">
    <property type="term" value="C:cytoplasm"/>
    <property type="evidence" value="ECO:0007669"/>
    <property type="project" value="UniProtKB-SubCell"/>
</dbReference>
<dbReference type="GO" id="GO:0003677">
    <property type="term" value="F:DNA binding"/>
    <property type="evidence" value="ECO:0007669"/>
    <property type="project" value="UniProtKB-KW"/>
</dbReference>
<dbReference type="GO" id="GO:0008263">
    <property type="term" value="F:pyrimidine-specific mismatch base pair DNA N-glycosylase activity"/>
    <property type="evidence" value="ECO:0007669"/>
    <property type="project" value="UniProtKB-UniRule"/>
</dbReference>
<dbReference type="GO" id="GO:0004844">
    <property type="term" value="F:uracil DNA N-glycosylase activity"/>
    <property type="evidence" value="ECO:0007669"/>
    <property type="project" value="TreeGrafter"/>
</dbReference>
<dbReference type="GO" id="GO:0006285">
    <property type="term" value="P:base-excision repair, AP site formation"/>
    <property type="evidence" value="ECO:0007669"/>
    <property type="project" value="UniProtKB-UniRule"/>
</dbReference>
<dbReference type="CDD" id="cd10028">
    <property type="entry name" value="UDG-F2_TDG_MUG"/>
    <property type="match status" value="1"/>
</dbReference>
<dbReference type="FunFam" id="3.40.470.10:FF:000003">
    <property type="entry name" value="G/U mismatch-specific DNA glycosylase"/>
    <property type="match status" value="1"/>
</dbReference>
<dbReference type="Gene3D" id="3.40.470.10">
    <property type="entry name" value="Uracil-DNA glycosylase-like domain"/>
    <property type="match status" value="1"/>
</dbReference>
<dbReference type="HAMAP" id="MF_01956">
    <property type="entry name" value="MUG"/>
    <property type="match status" value="1"/>
</dbReference>
<dbReference type="InterPro" id="IPR015637">
    <property type="entry name" value="MUG/TDG"/>
</dbReference>
<dbReference type="InterPro" id="IPR023502">
    <property type="entry name" value="MUG_bact"/>
</dbReference>
<dbReference type="InterPro" id="IPR005122">
    <property type="entry name" value="Uracil-DNA_glycosylase-like"/>
</dbReference>
<dbReference type="InterPro" id="IPR036895">
    <property type="entry name" value="Uracil-DNA_glycosylase-like_sf"/>
</dbReference>
<dbReference type="NCBIfam" id="NF007570">
    <property type="entry name" value="PRK10201.1"/>
    <property type="match status" value="1"/>
</dbReference>
<dbReference type="PANTHER" id="PTHR12159">
    <property type="entry name" value="G/T AND G/U MISMATCH-SPECIFIC DNA GLYCOSYLASE"/>
    <property type="match status" value="1"/>
</dbReference>
<dbReference type="PANTHER" id="PTHR12159:SF9">
    <property type="entry name" value="G_T MISMATCH-SPECIFIC THYMINE DNA GLYCOSYLASE"/>
    <property type="match status" value="1"/>
</dbReference>
<dbReference type="Pfam" id="PF03167">
    <property type="entry name" value="UDG"/>
    <property type="match status" value="1"/>
</dbReference>
<dbReference type="SUPFAM" id="SSF52141">
    <property type="entry name" value="Uracil-DNA glycosylase-like"/>
    <property type="match status" value="1"/>
</dbReference>
<name>MUG_ECO7I</name>
<evidence type="ECO:0000255" key="1">
    <source>
        <dbReference type="HAMAP-Rule" id="MF_01956"/>
    </source>
</evidence>
<proteinExistence type="inferred from homology"/>
<gene>
    <name evidence="1" type="primary">mug</name>
    <name type="ordered locus">ECIAI39_3565</name>
</gene>